<protein>
    <recommendedName>
        <fullName evidence="1">Heat-inducible transcription repressor HrcA</fullName>
    </recommendedName>
</protein>
<evidence type="ECO:0000255" key="1">
    <source>
        <dbReference type="HAMAP-Rule" id="MF_00081"/>
    </source>
</evidence>
<organism>
    <name type="scientific">Mesorhizobium japonicum (strain LMG 29417 / CECT 9101 / MAFF 303099)</name>
    <name type="common">Mesorhizobium loti (strain MAFF 303099)</name>
    <dbReference type="NCBI Taxonomy" id="266835"/>
    <lineage>
        <taxon>Bacteria</taxon>
        <taxon>Pseudomonadati</taxon>
        <taxon>Pseudomonadota</taxon>
        <taxon>Alphaproteobacteria</taxon>
        <taxon>Hyphomicrobiales</taxon>
        <taxon>Phyllobacteriaceae</taxon>
        <taxon>Mesorhizobium</taxon>
    </lineage>
</organism>
<dbReference type="EMBL" id="BA000012">
    <property type="protein sequence ID" value="BAB51233.1"/>
    <property type="molecule type" value="Genomic_DNA"/>
</dbReference>
<dbReference type="RefSeq" id="WP_010912575.1">
    <property type="nucleotide sequence ID" value="NC_002678.2"/>
</dbReference>
<dbReference type="SMR" id="Q98DN7"/>
<dbReference type="GeneID" id="66681023"/>
<dbReference type="KEGG" id="mlo:mll4621"/>
<dbReference type="eggNOG" id="COG1420">
    <property type="taxonomic scope" value="Bacteria"/>
</dbReference>
<dbReference type="HOGENOM" id="CLU_050019_0_0_5"/>
<dbReference type="Proteomes" id="UP000000552">
    <property type="component" value="Chromosome"/>
</dbReference>
<dbReference type="GO" id="GO:0003677">
    <property type="term" value="F:DNA binding"/>
    <property type="evidence" value="ECO:0007669"/>
    <property type="project" value="InterPro"/>
</dbReference>
<dbReference type="GO" id="GO:0045892">
    <property type="term" value="P:negative regulation of DNA-templated transcription"/>
    <property type="evidence" value="ECO:0007669"/>
    <property type="project" value="UniProtKB-UniRule"/>
</dbReference>
<dbReference type="Gene3D" id="3.30.450.40">
    <property type="match status" value="1"/>
</dbReference>
<dbReference type="Gene3D" id="3.30.390.60">
    <property type="entry name" value="Heat-inducible transcription repressor hrca homolog, domain 3"/>
    <property type="match status" value="1"/>
</dbReference>
<dbReference type="Gene3D" id="1.10.10.10">
    <property type="entry name" value="Winged helix-like DNA-binding domain superfamily/Winged helix DNA-binding domain"/>
    <property type="match status" value="1"/>
</dbReference>
<dbReference type="HAMAP" id="MF_00081">
    <property type="entry name" value="HrcA"/>
    <property type="match status" value="1"/>
</dbReference>
<dbReference type="InterPro" id="IPR029016">
    <property type="entry name" value="GAF-like_dom_sf"/>
</dbReference>
<dbReference type="InterPro" id="IPR002571">
    <property type="entry name" value="HrcA"/>
</dbReference>
<dbReference type="InterPro" id="IPR021153">
    <property type="entry name" value="HrcA_C"/>
</dbReference>
<dbReference type="InterPro" id="IPR036388">
    <property type="entry name" value="WH-like_DNA-bd_sf"/>
</dbReference>
<dbReference type="InterPro" id="IPR036390">
    <property type="entry name" value="WH_DNA-bd_sf"/>
</dbReference>
<dbReference type="InterPro" id="IPR023120">
    <property type="entry name" value="WHTH_transcript_rep_HrcA_IDD"/>
</dbReference>
<dbReference type="NCBIfam" id="TIGR00331">
    <property type="entry name" value="hrcA"/>
    <property type="match status" value="1"/>
</dbReference>
<dbReference type="PANTHER" id="PTHR34824">
    <property type="entry name" value="HEAT-INDUCIBLE TRANSCRIPTION REPRESSOR HRCA"/>
    <property type="match status" value="1"/>
</dbReference>
<dbReference type="PANTHER" id="PTHR34824:SF1">
    <property type="entry name" value="HEAT-INDUCIBLE TRANSCRIPTION REPRESSOR HRCA"/>
    <property type="match status" value="1"/>
</dbReference>
<dbReference type="Pfam" id="PF01628">
    <property type="entry name" value="HrcA"/>
    <property type="match status" value="1"/>
</dbReference>
<dbReference type="PIRSF" id="PIRSF005485">
    <property type="entry name" value="HrcA"/>
    <property type="match status" value="1"/>
</dbReference>
<dbReference type="SUPFAM" id="SSF55781">
    <property type="entry name" value="GAF domain-like"/>
    <property type="match status" value="1"/>
</dbReference>
<dbReference type="SUPFAM" id="SSF46785">
    <property type="entry name" value="Winged helix' DNA-binding domain"/>
    <property type="match status" value="1"/>
</dbReference>
<feature type="chain" id="PRO_0000182522" description="Heat-inducible transcription repressor HrcA">
    <location>
        <begin position="1"/>
        <end position="360"/>
    </location>
</feature>
<proteinExistence type="inferred from homology"/>
<accession>Q98DN7</accession>
<name>HRCA_RHILO</name>
<reference key="1">
    <citation type="journal article" date="2000" name="DNA Res.">
        <title>Complete genome structure of the nitrogen-fixing symbiotic bacterium Mesorhizobium loti.</title>
        <authorList>
            <person name="Kaneko T."/>
            <person name="Nakamura Y."/>
            <person name="Sato S."/>
            <person name="Asamizu E."/>
            <person name="Kato T."/>
            <person name="Sasamoto S."/>
            <person name="Watanabe A."/>
            <person name="Idesawa K."/>
            <person name="Ishikawa A."/>
            <person name="Kawashima K."/>
            <person name="Kimura T."/>
            <person name="Kishida Y."/>
            <person name="Kiyokawa C."/>
            <person name="Kohara M."/>
            <person name="Matsumoto M."/>
            <person name="Matsuno A."/>
            <person name="Mochizuki Y."/>
            <person name="Nakayama S."/>
            <person name="Nakazaki N."/>
            <person name="Shimpo S."/>
            <person name="Sugimoto M."/>
            <person name="Takeuchi C."/>
            <person name="Yamada M."/>
            <person name="Tabata S."/>
        </authorList>
    </citation>
    <scope>NUCLEOTIDE SEQUENCE [LARGE SCALE GENOMIC DNA]</scope>
    <source>
        <strain>LMG 29417 / CECT 9101 / MAFF 303099</strain>
    </source>
</reference>
<comment type="function">
    <text evidence="1">Negative regulator of class I heat shock genes (grpE-dnaK-dnaJ and groELS operons). Prevents heat-shock induction of these operons.</text>
</comment>
<comment type="similarity">
    <text evidence="1">Belongs to the HrcA family.</text>
</comment>
<keyword id="KW-0678">Repressor</keyword>
<keyword id="KW-0346">Stress response</keyword>
<keyword id="KW-0804">Transcription</keyword>
<keyword id="KW-0805">Transcription regulation</keyword>
<sequence>MTKAIDPGSQPLALQSLDMRSRDIFRRIVDSYLRDGEPVGSRSLSRILPSSLSPATIRNVMSDLEHLGLIYAPHISAGRLPTQAGLRFFVDAFMELGDLSDEERRTIEAQVRASGSGATLEHMLTEASQMLSGMSRGAGLVLAAKNEVALKHIEFIQLEPTKALAVLVSQNGDVENRVVELPAGITVSQLHEASNFLNAHIRGRTLAEARTEIARIKEETRAALDTLSQDLVEKGLAVWAGAESGLPARLIVRGRANLLENVTAQADIELLRHLFEDMETQDGLIQLLDLAEQGSGVRIFIGSENKLFSLSGSSLVVAPYRDKDARVVGALGVIGPTRLNYARIVPMVDYTAQLISRMLR</sequence>
<gene>
    <name evidence="1" type="primary">hrcA</name>
    <name type="ordered locus">mll4621</name>
</gene>